<dbReference type="EC" id="3.4.21.92" evidence="1"/>
<dbReference type="EMBL" id="BX548174">
    <property type="protein sequence ID" value="CAE19773.1"/>
    <property type="molecule type" value="Genomic_DNA"/>
</dbReference>
<dbReference type="RefSeq" id="WP_011132948.1">
    <property type="nucleotide sequence ID" value="NC_005072.1"/>
</dbReference>
<dbReference type="SMR" id="Q7V0F1"/>
<dbReference type="STRING" id="59919.PMM1314"/>
<dbReference type="MEROPS" id="S14.001"/>
<dbReference type="KEGG" id="pmm:PMM1314"/>
<dbReference type="eggNOG" id="COG0740">
    <property type="taxonomic scope" value="Bacteria"/>
</dbReference>
<dbReference type="HOGENOM" id="CLU_058707_3_2_3"/>
<dbReference type="OrthoDB" id="571524at2"/>
<dbReference type="Proteomes" id="UP000001026">
    <property type="component" value="Chromosome"/>
</dbReference>
<dbReference type="GO" id="GO:0005737">
    <property type="term" value="C:cytoplasm"/>
    <property type="evidence" value="ECO:0007669"/>
    <property type="project" value="UniProtKB-SubCell"/>
</dbReference>
<dbReference type="GO" id="GO:0009368">
    <property type="term" value="C:endopeptidase Clp complex"/>
    <property type="evidence" value="ECO:0007669"/>
    <property type="project" value="TreeGrafter"/>
</dbReference>
<dbReference type="GO" id="GO:0004176">
    <property type="term" value="F:ATP-dependent peptidase activity"/>
    <property type="evidence" value="ECO:0007669"/>
    <property type="project" value="InterPro"/>
</dbReference>
<dbReference type="GO" id="GO:0051117">
    <property type="term" value="F:ATPase binding"/>
    <property type="evidence" value="ECO:0007669"/>
    <property type="project" value="TreeGrafter"/>
</dbReference>
<dbReference type="GO" id="GO:0004252">
    <property type="term" value="F:serine-type endopeptidase activity"/>
    <property type="evidence" value="ECO:0007669"/>
    <property type="project" value="UniProtKB-UniRule"/>
</dbReference>
<dbReference type="GO" id="GO:0006515">
    <property type="term" value="P:protein quality control for misfolded or incompletely synthesized proteins"/>
    <property type="evidence" value="ECO:0007669"/>
    <property type="project" value="TreeGrafter"/>
</dbReference>
<dbReference type="CDD" id="cd07017">
    <property type="entry name" value="S14_ClpP_2"/>
    <property type="match status" value="1"/>
</dbReference>
<dbReference type="FunFam" id="3.90.226.10:FF:000001">
    <property type="entry name" value="ATP-dependent Clp protease proteolytic subunit"/>
    <property type="match status" value="1"/>
</dbReference>
<dbReference type="Gene3D" id="3.90.226.10">
    <property type="entry name" value="2-enoyl-CoA Hydratase, Chain A, domain 1"/>
    <property type="match status" value="1"/>
</dbReference>
<dbReference type="HAMAP" id="MF_00444">
    <property type="entry name" value="ClpP"/>
    <property type="match status" value="1"/>
</dbReference>
<dbReference type="InterPro" id="IPR001907">
    <property type="entry name" value="ClpP"/>
</dbReference>
<dbReference type="InterPro" id="IPR029045">
    <property type="entry name" value="ClpP/crotonase-like_dom_sf"/>
</dbReference>
<dbReference type="InterPro" id="IPR023562">
    <property type="entry name" value="ClpP/TepA"/>
</dbReference>
<dbReference type="InterPro" id="IPR033135">
    <property type="entry name" value="ClpP_His_AS"/>
</dbReference>
<dbReference type="InterPro" id="IPR018215">
    <property type="entry name" value="ClpP_Ser_AS"/>
</dbReference>
<dbReference type="NCBIfam" id="NF001368">
    <property type="entry name" value="PRK00277.1"/>
    <property type="match status" value="1"/>
</dbReference>
<dbReference type="NCBIfam" id="NF009205">
    <property type="entry name" value="PRK12553.1"/>
    <property type="match status" value="1"/>
</dbReference>
<dbReference type="PANTHER" id="PTHR10381">
    <property type="entry name" value="ATP-DEPENDENT CLP PROTEASE PROTEOLYTIC SUBUNIT"/>
    <property type="match status" value="1"/>
</dbReference>
<dbReference type="PANTHER" id="PTHR10381:SF70">
    <property type="entry name" value="ATP-DEPENDENT CLP PROTEASE PROTEOLYTIC SUBUNIT"/>
    <property type="match status" value="1"/>
</dbReference>
<dbReference type="Pfam" id="PF00574">
    <property type="entry name" value="CLP_protease"/>
    <property type="match status" value="1"/>
</dbReference>
<dbReference type="PRINTS" id="PR00127">
    <property type="entry name" value="CLPPROTEASEP"/>
</dbReference>
<dbReference type="SUPFAM" id="SSF52096">
    <property type="entry name" value="ClpP/crotonase"/>
    <property type="match status" value="1"/>
</dbReference>
<dbReference type="PROSITE" id="PS00382">
    <property type="entry name" value="CLP_PROTEASE_HIS"/>
    <property type="match status" value="1"/>
</dbReference>
<dbReference type="PROSITE" id="PS00381">
    <property type="entry name" value="CLP_PROTEASE_SER"/>
    <property type="match status" value="1"/>
</dbReference>
<sequence length="201" mass="22160">MPIGTPSVPYRLPGSQYERWVDIYTRLGVERILFLGQEVNDGIANSLVAQMLYLDSDDNTKPIYLYINSPGGSVTAGLAIYDTIKYVKSDVVTICVGLAASMGAFLLGAGTKGKRVALPHSRIMIHQPLGGTSQRQASDIEIEAREILRIKDMLNHSMSDMTGQSFEKIEKDTDRDYFLSAEEAKNYGLIDRVISHPSEAS</sequence>
<evidence type="ECO:0000255" key="1">
    <source>
        <dbReference type="HAMAP-Rule" id="MF_00444"/>
    </source>
</evidence>
<comment type="function">
    <text evidence="1">Cleaves peptides in various proteins in a process that requires ATP hydrolysis. Has a chymotrypsin-like activity. Plays a major role in the degradation of misfolded proteins.</text>
</comment>
<comment type="catalytic activity">
    <reaction evidence="1">
        <text>Hydrolysis of proteins to small peptides in the presence of ATP and magnesium. alpha-casein is the usual test substrate. In the absence of ATP, only oligopeptides shorter than five residues are hydrolyzed (such as succinyl-Leu-Tyr-|-NHMec, and Leu-Tyr-Leu-|-Tyr-Trp, in which cleavage of the -Tyr-|-Leu- and -Tyr-|-Trp bonds also occurs).</text>
        <dbReference type="EC" id="3.4.21.92"/>
    </reaction>
</comment>
<comment type="subunit">
    <text evidence="1">Fourteen ClpP subunits assemble into 2 heptameric rings which stack back to back to give a disk-like structure with a central cavity, resembling the structure of eukaryotic proteasomes.</text>
</comment>
<comment type="subcellular location">
    <subcellularLocation>
        <location evidence="1">Cytoplasm</location>
    </subcellularLocation>
</comment>
<comment type="similarity">
    <text evidence="1">Belongs to the peptidase S14 family.</text>
</comment>
<name>CLPP2_PROMP</name>
<gene>
    <name evidence="1" type="primary">clpP2</name>
    <name type="ordered locus">PMM1314</name>
</gene>
<organism>
    <name type="scientific">Prochlorococcus marinus subsp. pastoris (strain CCMP1986 / NIES-2087 / MED4)</name>
    <dbReference type="NCBI Taxonomy" id="59919"/>
    <lineage>
        <taxon>Bacteria</taxon>
        <taxon>Bacillati</taxon>
        <taxon>Cyanobacteriota</taxon>
        <taxon>Cyanophyceae</taxon>
        <taxon>Synechococcales</taxon>
        <taxon>Prochlorococcaceae</taxon>
        <taxon>Prochlorococcus</taxon>
    </lineage>
</organism>
<protein>
    <recommendedName>
        <fullName evidence="1">ATP-dependent Clp protease proteolytic subunit 2</fullName>
        <ecNumber evidence="1">3.4.21.92</ecNumber>
    </recommendedName>
    <alternativeName>
        <fullName evidence="1">Endopeptidase Clp 2</fullName>
    </alternativeName>
</protein>
<reference key="1">
    <citation type="journal article" date="2003" name="Nature">
        <title>Genome divergence in two Prochlorococcus ecotypes reflects oceanic niche differentiation.</title>
        <authorList>
            <person name="Rocap G."/>
            <person name="Larimer F.W."/>
            <person name="Lamerdin J.E."/>
            <person name="Malfatti S."/>
            <person name="Chain P."/>
            <person name="Ahlgren N.A."/>
            <person name="Arellano A."/>
            <person name="Coleman M."/>
            <person name="Hauser L."/>
            <person name="Hess W.R."/>
            <person name="Johnson Z.I."/>
            <person name="Land M.L."/>
            <person name="Lindell D."/>
            <person name="Post A.F."/>
            <person name="Regala W."/>
            <person name="Shah M."/>
            <person name="Shaw S.L."/>
            <person name="Steglich C."/>
            <person name="Sullivan M.B."/>
            <person name="Ting C.S."/>
            <person name="Tolonen A."/>
            <person name="Webb E.A."/>
            <person name="Zinser E.R."/>
            <person name="Chisholm S.W."/>
        </authorList>
    </citation>
    <scope>NUCLEOTIDE SEQUENCE [LARGE SCALE GENOMIC DNA]</scope>
    <source>
        <strain>CCMP1986 / NIES-2087 / MED4</strain>
    </source>
</reference>
<feature type="chain" id="PRO_0000179624" description="ATP-dependent Clp protease proteolytic subunit 2">
    <location>
        <begin position="1"/>
        <end position="201"/>
    </location>
</feature>
<feature type="active site" description="Nucleophile" evidence="1">
    <location>
        <position position="101"/>
    </location>
</feature>
<feature type="active site" evidence="1">
    <location>
        <position position="126"/>
    </location>
</feature>
<proteinExistence type="inferred from homology"/>
<accession>Q7V0F1</accession>
<keyword id="KW-0963">Cytoplasm</keyword>
<keyword id="KW-0378">Hydrolase</keyword>
<keyword id="KW-0645">Protease</keyword>
<keyword id="KW-0720">Serine protease</keyword>